<protein>
    <recommendedName>
        <fullName evidence="4">Phylloseptin-J2</fullName>
        <shortName evidence="4">PLS-J2</shortName>
        <shortName>PS-J2</shortName>
    </recommendedName>
</protein>
<dbReference type="GO" id="GO:0005576">
    <property type="term" value="C:extracellular region"/>
    <property type="evidence" value="ECO:0007669"/>
    <property type="project" value="UniProtKB-SubCell"/>
</dbReference>
<dbReference type="GO" id="GO:0006952">
    <property type="term" value="P:defense response"/>
    <property type="evidence" value="ECO:0007669"/>
    <property type="project" value="UniProtKB-KW"/>
</dbReference>
<organism>
    <name type="scientific">Phasmahyla jandaia</name>
    <name type="common">Jandaia leaf frog</name>
    <name type="synonym">Phyllomedusa jandaia</name>
    <dbReference type="NCBI Taxonomy" id="762504"/>
    <lineage>
        <taxon>Eukaryota</taxon>
        <taxon>Metazoa</taxon>
        <taxon>Chordata</taxon>
        <taxon>Craniata</taxon>
        <taxon>Vertebrata</taxon>
        <taxon>Euteleostomi</taxon>
        <taxon>Amphibia</taxon>
        <taxon>Batrachia</taxon>
        <taxon>Anura</taxon>
        <taxon>Neobatrachia</taxon>
        <taxon>Hyloidea</taxon>
        <taxon>Hylidae</taxon>
        <taxon>Phyllomedusinae</taxon>
        <taxon>Phasmahyla</taxon>
    </lineage>
</organism>
<reference evidence="5" key="1">
    <citation type="journal article" date="2011" name="Toxicon">
        <title>Peptidomic dissection of the skin secretion of Phasmahyla jandaia (Bokermann and Sazima, 1978) (Anura, Hylidae, Phyllomedusinae).</title>
        <authorList>
            <person name="Rates B."/>
            <person name="Silva L.P."/>
            <person name="Ireno I.C."/>
            <person name="Leite F.S."/>
            <person name="Borges M.H."/>
            <person name="Bloch C. Jr."/>
            <person name="De Lima M.E."/>
            <person name="Pimenta A.M."/>
        </authorList>
    </citation>
    <scope>PROTEIN SEQUENCE</scope>
    <scope>SUBCELLULAR LOCATION</scope>
    <scope>TISSUE SPECIFICITY</scope>
    <scope>MASS SPECTROMETRY</scope>
    <scope>AMIDATION AT PHE-19</scope>
    <source>
        <tissue evidence="3">Skin secretion</tissue>
    </source>
</reference>
<evidence type="ECO:0000250" key="1">
    <source>
        <dbReference type="UniProtKB" id="P84572"/>
    </source>
</evidence>
<evidence type="ECO:0000255" key="2"/>
<evidence type="ECO:0000269" key="3">
    <source>
    </source>
</evidence>
<evidence type="ECO:0000303" key="4">
    <source>
    </source>
</evidence>
<evidence type="ECO:0000305" key="5"/>
<keyword id="KW-0027">Amidation</keyword>
<keyword id="KW-0878">Amphibian defense peptide</keyword>
<keyword id="KW-0929">Antimicrobial</keyword>
<keyword id="KW-0903">Direct protein sequencing</keyword>
<keyword id="KW-0964">Secreted</keyword>
<feature type="peptide" id="PRO_0000404621" description="Phylloseptin-J2" evidence="1 5">
    <location>
        <begin position="1"/>
        <end position="19"/>
    </location>
</feature>
<feature type="modified residue" description="Phenylalanine amide" evidence="3">
    <location>
        <position position="19"/>
    </location>
</feature>
<feature type="unsure residue" description="L or I" evidence="3">
    <location>
        <position position="2"/>
    </location>
</feature>
<feature type="unsure residue" description="L or I" evidence="3">
    <location>
        <position position="4"/>
    </location>
</feature>
<feature type="unsure residue" description="I or L" evidence="3">
    <location>
        <position position="5"/>
    </location>
</feature>
<feature type="unsure residue" description="I or L" evidence="3">
    <location>
        <position position="9"/>
    </location>
</feature>
<feature type="unsure residue" description="I or L" evidence="3">
    <location>
        <position position="12"/>
    </location>
</feature>
<feature type="unsure residue" description="I or L" evidence="3">
    <location>
        <position position="15"/>
    </location>
</feature>
<sequence length="19" mass="2050">FLSLIPHAINAISAIADHF</sequence>
<proteinExistence type="evidence at protein level"/>
<comment type="function">
    <text evidence="1">Has antimicrobial activity.</text>
</comment>
<comment type="subcellular location">
    <subcellularLocation>
        <location evidence="3">Secreted</location>
    </subcellularLocation>
</comment>
<comment type="tissue specificity">
    <text evidence="3">Expressed by the skin glands.</text>
</comment>
<comment type="mass spectrometry" mass="2048.1" method="MALDI" evidence="3"/>
<comment type="similarity">
    <text evidence="2">Belongs to the frog skin active peptide (FSAP) family. Phylloseptin subfamily.</text>
</comment>
<name>PLS2_PHAJA</name>
<accession>P86615</accession>